<sequence length="38" mass="3919">AQTVEVKMGADGGLLVFEPAKAGPHNVVFDEDNIPPGV</sequence>
<name>PLAS_THAOC</name>
<comment type="function">
    <text evidence="3">Participates in electron transfer between P700 and the cytochrome b6-f complex in photosystem I.</text>
</comment>
<comment type="cofactor">
    <cofactor evidence="1">
        <name>Cu(2+)</name>
        <dbReference type="ChEBI" id="CHEBI:29036"/>
    </cofactor>
</comment>
<comment type="subcellular location">
    <subcellularLocation>
        <location evidence="3">Plastid</location>
        <location evidence="3">Chloroplast thylakoid membrane</location>
        <topology evidence="1">Peripheral membrane protein</topology>
        <orientation evidence="1">Lumenal side</orientation>
    </subcellularLocation>
    <text>Loosely bound to the inner thylakoid membrane surface in chloroplasts (By similarity).</text>
</comment>
<comment type="similarity">
    <text evidence="5">Belongs to the plastocyanin family.</text>
</comment>
<evidence type="ECO:0000250" key="1">
    <source>
        <dbReference type="UniProtKB" id="P18068"/>
    </source>
</evidence>
<evidence type="ECO:0000255" key="2"/>
<evidence type="ECO:0000269" key="3">
    <source>
    </source>
</evidence>
<evidence type="ECO:0000303" key="4">
    <source>
    </source>
</evidence>
<evidence type="ECO:0000305" key="5"/>
<proteinExistence type="evidence at protein level"/>
<organism>
    <name type="scientific">Thalassiosira oceanica</name>
    <name type="common">Marine diatom</name>
    <dbReference type="NCBI Taxonomy" id="159749"/>
    <lineage>
        <taxon>Eukaryota</taxon>
        <taxon>Sar</taxon>
        <taxon>Stramenopiles</taxon>
        <taxon>Ochrophyta</taxon>
        <taxon>Bacillariophyta</taxon>
        <taxon>Coscinodiscophyceae</taxon>
        <taxon>Thalassiosirophycidae</taxon>
        <taxon>Thalassiosirales</taxon>
        <taxon>Thalassiosiraceae</taxon>
        <taxon>Thalassiosira</taxon>
    </lineage>
</organism>
<protein>
    <recommendedName>
        <fullName>Plastocyanin</fullName>
    </recommendedName>
</protein>
<reference evidence="5" key="1">
    <citation type="journal article" date="2006" name="Nature">
        <title>Copper-containing plastocyanin used for electron transport by an oceanic diatom.</title>
        <authorList>
            <person name="Peers G."/>
            <person name="Price N.M."/>
        </authorList>
    </citation>
    <scope>PROTEIN SEQUENCE</scope>
    <scope>FUNCTION</scope>
    <scope>SUBCELLULAR LOCATION</scope>
    <source>
        <strain>CCMP1005 / NEPCC610</strain>
    </source>
</reference>
<gene>
    <name type="primary">PETE</name>
</gene>
<keyword id="KW-0150">Chloroplast</keyword>
<keyword id="KW-0186">Copper</keyword>
<keyword id="KW-0903">Direct protein sequencing</keyword>
<keyword id="KW-0249">Electron transport</keyword>
<keyword id="KW-0472">Membrane</keyword>
<keyword id="KW-0479">Metal-binding</keyword>
<keyword id="KW-0934">Plastid</keyword>
<keyword id="KW-0793">Thylakoid</keyword>
<keyword id="KW-0813">Transport</keyword>
<dbReference type="GO" id="GO:0009535">
    <property type="term" value="C:chloroplast thylakoid membrane"/>
    <property type="evidence" value="ECO:0007669"/>
    <property type="project" value="UniProtKB-SubCell"/>
</dbReference>
<dbReference type="GO" id="GO:0046872">
    <property type="term" value="F:metal ion binding"/>
    <property type="evidence" value="ECO:0007669"/>
    <property type="project" value="UniProtKB-KW"/>
</dbReference>
<feature type="chain" id="PRO_0000234483" description="Plastocyanin" evidence="3">
    <location>
        <begin position="1"/>
        <end position="38" status="greater than"/>
    </location>
</feature>
<feature type="domain" description="Plastocyanin-like" evidence="2">
    <location>
        <begin position="1"/>
        <end position="38" status="greater than"/>
    </location>
</feature>
<feature type="binding site" evidence="1">
    <location>
        <position position="25"/>
    </location>
    <ligand>
        <name>Cu cation</name>
        <dbReference type="ChEBI" id="CHEBI:23378"/>
    </ligand>
</feature>
<feature type="non-consecutive residues" evidence="4">
    <location>
        <begin position="21"/>
        <end position="22"/>
    </location>
</feature>
<feature type="non-terminal residue" evidence="4">
    <location>
        <position position="38"/>
    </location>
</feature>
<accession>P84800</accession>